<gene>
    <name evidence="1" type="primary">cas2</name>
    <name type="ordered locus">Rv2816c</name>
</gene>
<sequence length="113" mass="12867">MPTRSREEYFNLPLKVDESSGTIGKMFVLVIYDISDNRRRASLAKILAGFGYRVQESAFEAMLTKGQLAKLVARIDRFAIDCDNIRIYKIRGVAAVTFYGRGRLVSAEEFVFF</sequence>
<accession>P9WPJ3</accession>
<accession>F2GLB8</accession>
<accession>L0TAY6</accession>
<accession>P71637</accession>
<accession>Q7D6I8</accession>
<comment type="function">
    <text evidence="2 3">CRISPR (clustered regularly interspaced short palindromic repeat) is an adaptive immune system that provides protection against mobile genetic elements (viruses, transposable elements and conjugative plasmids). CRISPR clusters contain spacers, sequences complementary to antecedent mobile elements, and target invading nucleic acids. CRISPR clusters are transcribed and processed into CRISPR RNA (crRNA). The type III-A Csm effector complex binds crRNA and acts as a crRNA-guided RNase, DNase and cyclic oligoadenylate synthase; binding of target RNA cognate to the crRNA is required for all activities (Probable). This CRISPR-Cas system protects bacteria against transformation with plasmids containing DNA homologous to its spacer regions (PubMed:29979631).</text>
</comment>
<comment type="cofactor">
    <cofactor evidence="1">
        <name>Mg(2+)</name>
        <dbReference type="ChEBI" id="CHEBI:18420"/>
    </cofactor>
</comment>
<comment type="subunit">
    <text evidence="1">Homodimer, forms a heterotetramer with a Cas1 homodimer.</text>
</comment>
<comment type="disruption phenotype">
    <text evidence="2">Deletion of the entire CRISPR-Cas locus (cas6 to cas2, Rv2824c to Rv2816c) decreases resistance to plasmids encoding spacer elements about 6-fold.</text>
</comment>
<comment type="miscellaneous">
    <text evidence="3">Encoded in a type III-A CRISPR locus.</text>
</comment>
<comment type="similarity">
    <text evidence="1">Belongs to the CRISPR-associated endoribonuclease Cas2 protein family.</text>
</comment>
<reference key="1">
    <citation type="journal article" date="1998" name="Nature">
        <title>Deciphering the biology of Mycobacterium tuberculosis from the complete genome sequence.</title>
        <authorList>
            <person name="Cole S.T."/>
            <person name="Brosch R."/>
            <person name="Parkhill J."/>
            <person name="Garnier T."/>
            <person name="Churcher C.M."/>
            <person name="Harris D.E."/>
            <person name="Gordon S.V."/>
            <person name="Eiglmeier K."/>
            <person name="Gas S."/>
            <person name="Barry C.E. III"/>
            <person name="Tekaia F."/>
            <person name="Badcock K."/>
            <person name="Basham D."/>
            <person name="Brown D."/>
            <person name="Chillingworth T."/>
            <person name="Connor R."/>
            <person name="Davies R.M."/>
            <person name="Devlin K."/>
            <person name="Feltwell T."/>
            <person name="Gentles S."/>
            <person name="Hamlin N."/>
            <person name="Holroyd S."/>
            <person name="Hornsby T."/>
            <person name="Jagels K."/>
            <person name="Krogh A."/>
            <person name="McLean J."/>
            <person name="Moule S."/>
            <person name="Murphy L.D."/>
            <person name="Oliver S."/>
            <person name="Osborne J."/>
            <person name="Quail M.A."/>
            <person name="Rajandream M.A."/>
            <person name="Rogers J."/>
            <person name="Rutter S."/>
            <person name="Seeger K."/>
            <person name="Skelton S."/>
            <person name="Squares S."/>
            <person name="Squares R."/>
            <person name="Sulston J.E."/>
            <person name="Taylor K."/>
            <person name="Whitehead S."/>
            <person name="Barrell B.G."/>
        </authorList>
    </citation>
    <scope>NUCLEOTIDE SEQUENCE [LARGE SCALE GENOMIC DNA]</scope>
    <source>
        <strain>ATCC 25618 / H37Rv</strain>
    </source>
</reference>
<reference key="2">
    <citation type="journal article" date="2019" name="FASEB J.">
        <title>Mycobacterium tuberculosis type III-A CRISPR/Cas system crRNA and its maturation have atypical features.</title>
        <authorList>
            <person name="Wei W."/>
            <person name="Zhang S."/>
            <person name="Fleming J."/>
            <person name="Chen Y."/>
            <person name="Li Z."/>
            <person name="Fan S."/>
            <person name="Liu Y."/>
            <person name="Wang W."/>
            <person name="Wang T."/>
            <person name="Liu Y."/>
            <person name="Ren B."/>
            <person name="Wang M."/>
            <person name="Jiao J."/>
            <person name="Chen Y."/>
            <person name="Zhou Y."/>
            <person name="Zhou Y."/>
            <person name="Gu S."/>
            <person name="Zhang X."/>
            <person name="Wan L."/>
            <person name="Chen T."/>
            <person name="Zhou L."/>
            <person name="Chen Y."/>
            <person name="Zhang X.E."/>
            <person name="Li C."/>
            <person name="Zhang H."/>
            <person name="Bi L."/>
        </authorList>
    </citation>
    <scope>FUNCTION IN PLASMID RESISTANCE</scope>
    <scope>DISRUPTION PHENOTYPE</scope>
    <source>
        <strain>H37Rv</strain>
    </source>
</reference>
<organism>
    <name type="scientific">Mycobacterium tuberculosis (strain ATCC 25618 / H37Rv)</name>
    <dbReference type="NCBI Taxonomy" id="83332"/>
    <lineage>
        <taxon>Bacteria</taxon>
        <taxon>Bacillati</taxon>
        <taxon>Actinomycetota</taxon>
        <taxon>Actinomycetes</taxon>
        <taxon>Mycobacteriales</taxon>
        <taxon>Mycobacteriaceae</taxon>
        <taxon>Mycobacterium</taxon>
        <taxon>Mycobacterium tuberculosis complex</taxon>
    </lineage>
</organism>
<protein>
    <recommendedName>
        <fullName evidence="1">CRISPR-associated endoribonuclease Cas2</fullName>
        <ecNumber evidence="1">3.1.-.-</ecNumber>
    </recommendedName>
</protein>
<dbReference type="EC" id="3.1.-.-" evidence="1"/>
<dbReference type="EMBL" id="AL123456">
    <property type="protein sequence ID" value="CCP45616.1"/>
    <property type="molecule type" value="Genomic_DNA"/>
</dbReference>
<dbReference type="PIR" id="C70691">
    <property type="entry name" value="C70691"/>
</dbReference>
<dbReference type="RefSeq" id="NP_217332.1">
    <property type="nucleotide sequence ID" value="NC_000962.3"/>
</dbReference>
<dbReference type="RefSeq" id="WP_003414276.1">
    <property type="nucleotide sequence ID" value="NZ_NVQJ01000006.1"/>
</dbReference>
<dbReference type="SMR" id="P9WPJ3"/>
<dbReference type="STRING" id="83332.Rv2816c"/>
<dbReference type="PaxDb" id="83332-Rv2816c"/>
<dbReference type="DNASU" id="888520"/>
<dbReference type="GeneID" id="888520"/>
<dbReference type="KEGG" id="mtu:Rv2816c"/>
<dbReference type="KEGG" id="mtv:RVBD_2816c"/>
<dbReference type="TubercuList" id="Rv2816c"/>
<dbReference type="eggNOG" id="COG1343">
    <property type="taxonomic scope" value="Bacteria"/>
</dbReference>
<dbReference type="InParanoid" id="P9WPJ3"/>
<dbReference type="OrthoDB" id="9798176at2"/>
<dbReference type="Proteomes" id="UP000001584">
    <property type="component" value="Chromosome"/>
</dbReference>
<dbReference type="GO" id="GO:0046872">
    <property type="term" value="F:metal ion binding"/>
    <property type="evidence" value="ECO:0007669"/>
    <property type="project" value="UniProtKB-UniRule"/>
</dbReference>
<dbReference type="GO" id="GO:0004521">
    <property type="term" value="F:RNA endonuclease activity"/>
    <property type="evidence" value="ECO:0007669"/>
    <property type="project" value="InterPro"/>
</dbReference>
<dbReference type="GO" id="GO:0051607">
    <property type="term" value="P:defense response to virus"/>
    <property type="evidence" value="ECO:0007669"/>
    <property type="project" value="UniProtKB-UniRule"/>
</dbReference>
<dbReference type="GO" id="GO:0043571">
    <property type="term" value="P:maintenance of CRISPR repeat elements"/>
    <property type="evidence" value="ECO:0007669"/>
    <property type="project" value="UniProtKB-UniRule"/>
</dbReference>
<dbReference type="CDD" id="cd09638">
    <property type="entry name" value="Cas2_I_II_III"/>
    <property type="match status" value="1"/>
</dbReference>
<dbReference type="Gene3D" id="3.30.70.240">
    <property type="match status" value="1"/>
</dbReference>
<dbReference type="HAMAP" id="MF_01471">
    <property type="entry name" value="Cas2"/>
    <property type="match status" value="1"/>
</dbReference>
<dbReference type="InterPro" id="IPR021127">
    <property type="entry name" value="CRISPR_associated_Cas2"/>
</dbReference>
<dbReference type="InterPro" id="IPR019199">
    <property type="entry name" value="Virulence_VapD/CRISPR_Cas2"/>
</dbReference>
<dbReference type="NCBIfam" id="TIGR01573">
    <property type="entry name" value="cas2"/>
    <property type="match status" value="1"/>
</dbReference>
<dbReference type="PANTHER" id="PTHR34405">
    <property type="entry name" value="CRISPR-ASSOCIATED ENDORIBONUCLEASE CAS2"/>
    <property type="match status" value="1"/>
</dbReference>
<dbReference type="PANTHER" id="PTHR34405:SF3">
    <property type="entry name" value="CRISPR-ASSOCIATED ENDORIBONUCLEASE CAS2 3"/>
    <property type="match status" value="1"/>
</dbReference>
<dbReference type="Pfam" id="PF09827">
    <property type="entry name" value="CRISPR_Cas2"/>
    <property type="match status" value="1"/>
</dbReference>
<dbReference type="SUPFAM" id="SSF143430">
    <property type="entry name" value="TTP0101/SSO1404-like"/>
    <property type="match status" value="1"/>
</dbReference>
<evidence type="ECO:0000255" key="1">
    <source>
        <dbReference type="HAMAP-Rule" id="MF_01471"/>
    </source>
</evidence>
<evidence type="ECO:0000269" key="2">
    <source>
    </source>
</evidence>
<evidence type="ECO:0000305" key="3">
    <source>
    </source>
</evidence>
<proteinExistence type="evidence at protein level"/>
<name>CAS2_MYCTU</name>
<keyword id="KW-0051">Antiviral defense</keyword>
<keyword id="KW-0255">Endonuclease</keyword>
<keyword id="KW-0378">Hydrolase</keyword>
<keyword id="KW-0460">Magnesium</keyword>
<keyword id="KW-0479">Metal-binding</keyword>
<keyword id="KW-0540">Nuclease</keyword>
<keyword id="KW-1185">Reference proteome</keyword>
<feature type="chain" id="PRO_0000418219" description="CRISPR-associated endoribonuclease Cas2">
    <location>
        <begin position="1"/>
        <end position="113"/>
    </location>
</feature>
<feature type="binding site" evidence="1">
    <location>
        <position position="33"/>
    </location>
    <ligand>
        <name>Mg(2+)</name>
        <dbReference type="ChEBI" id="CHEBI:18420"/>
        <note>catalytic</note>
    </ligand>
</feature>